<name>COAD_STRR6</name>
<gene>
    <name evidence="1" type="primary">coaD</name>
    <name type="synonym">kdtB</name>
    <name type="ordered locus">spr1783</name>
</gene>
<reference key="1">
    <citation type="journal article" date="2001" name="J. Bacteriol.">
        <title>Genome of the bacterium Streptococcus pneumoniae strain R6.</title>
        <authorList>
            <person name="Hoskins J."/>
            <person name="Alborn W.E. Jr."/>
            <person name="Arnold J."/>
            <person name="Blaszczak L.C."/>
            <person name="Burgett S."/>
            <person name="DeHoff B.S."/>
            <person name="Estrem S.T."/>
            <person name="Fritz L."/>
            <person name="Fu D.-J."/>
            <person name="Fuller W."/>
            <person name="Geringer C."/>
            <person name="Gilmour R."/>
            <person name="Glass J.S."/>
            <person name="Khoja H."/>
            <person name="Kraft A.R."/>
            <person name="Lagace R.E."/>
            <person name="LeBlanc D.J."/>
            <person name="Lee L.N."/>
            <person name="Lefkowitz E.J."/>
            <person name="Lu J."/>
            <person name="Matsushima P."/>
            <person name="McAhren S.M."/>
            <person name="McHenney M."/>
            <person name="McLeaster K."/>
            <person name="Mundy C.W."/>
            <person name="Nicas T.I."/>
            <person name="Norris F.H."/>
            <person name="O'Gara M."/>
            <person name="Peery R.B."/>
            <person name="Robertson G.T."/>
            <person name="Rockey P."/>
            <person name="Sun P.-M."/>
            <person name="Winkler M.E."/>
            <person name="Yang Y."/>
            <person name="Young-Bellido M."/>
            <person name="Zhao G."/>
            <person name="Zook C.A."/>
            <person name="Baltz R.H."/>
            <person name="Jaskunas S.R."/>
            <person name="Rosteck P.R. Jr."/>
            <person name="Skatrud P.L."/>
            <person name="Glass J.I."/>
        </authorList>
    </citation>
    <scope>NUCLEOTIDE SEQUENCE [LARGE SCALE GENOMIC DNA]</scope>
    <source>
        <strain>ATCC BAA-255 / R6</strain>
    </source>
</reference>
<reference key="2">
    <citation type="journal article" date="2013" name="Antimicrob. Agents Chemother.">
        <title>Discovery of inhibitors of 4'-phosphopantetheine adenylyltransferase (PPAT) to validate PPAT as a target for antibacterial therapy.</title>
        <authorList>
            <person name="de Jonge B.L."/>
            <person name="Walkup G.K."/>
            <person name="Lahiri S.D."/>
            <person name="Huynh H."/>
            <person name="Neckermann G."/>
            <person name="Utley L."/>
            <person name="Nash T.J."/>
            <person name="Brock J."/>
            <person name="San Martin M."/>
            <person name="Kutschke A."/>
            <person name="Johnstone M."/>
            <person name="Laganas V."/>
            <person name="Hajec L."/>
            <person name="Gu R.F."/>
            <person name="Ni H."/>
            <person name="Chen B."/>
            <person name="Hutchings K."/>
            <person name="Holt E."/>
            <person name="McKinney D."/>
            <person name="Gao N."/>
            <person name="Livchak S."/>
            <person name="Thresher J."/>
        </authorList>
    </citation>
    <scope>FUNCTION</scope>
    <scope>CATALYTIC ACTIVITY</scope>
    <scope>ACTIVITY REGULATION</scope>
    <scope>BIOTECHNOLOGY</scope>
    <source>
        <strain>ATCC BAA-255 / R6</strain>
    </source>
</reference>
<keyword id="KW-0067">ATP-binding</keyword>
<keyword id="KW-0173">Coenzyme A biosynthesis</keyword>
<keyword id="KW-0963">Cytoplasm</keyword>
<keyword id="KW-0460">Magnesium</keyword>
<keyword id="KW-0547">Nucleotide-binding</keyword>
<keyword id="KW-0548">Nucleotidyltransferase</keyword>
<keyword id="KW-1185">Reference proteome</keyword>
<keyword id="KW-0808">Transferase</keyword>
<protein>
    <recommendedName>
        <fullName evidence="1 3">Phosphopantetheine adenylyltransferase</fullName>
        <ecNumber evidence="1 2">2.7.7.3</ecNumber>
    </recommendedName>
    <alternativeName>
        <fullName evidence="1">Dephospho-CoA pyrophosphorylase</fullName>
    </alternativeName>
    <alternativeName>
        <fullName evidence="1">Pantetheine-phosphate adenylyltransferase</fullName>
        <shortName evidence="1 3">PPAT</shortName>
    </alternativeName>
</protein>
<feature type="chain" id="PRO_0000156285" description="Phosphopantetheine adenylyltransferase">
    <location>
        <begin position="1"/>
        <end position="162"/>
    </location>
</feature>
<feature type="binding site" evidence="1">
    <location>
        <begin position="11"/>
        <end position="12"/>
    </location>
    <ligand>
        <name>ATP</name>
        <dbReference type="ChEBI" id="CHEBI:30616"/>
    </ligand>
</feature>
<feature type="binding site" evidence="1">
    <location>
        <position position="11"/>
    </location>
    <ligand>
        <name>substrate</name>
    </ligand>
</feature>
<feature type="binding site" evidence="1">
    <location>
        <position position="19"/>
    </location>
    <ligand>
        <name>ATP</name>
        <dbReference type="ChEBI" id="CHEBI:30616"/>
    </ligand>
</feature>
<feature type="binding site" evidence="1">
    <location>
        <position position="43"/>
    </location>
    <ligand>
        <name>substrate</name>
    </ligand>
</feature>
<feature type="binding site" evidence="1">
    <location>
        <position position="76"/>
    </location>
    <ligand>
        <name>substrate</name>
    </ligand>
</feature>
<feature type="binding site" evidence="1">
    <location>
        <position position="90"/>
    </location>
    <ligand>
        <name>substrate</name>
    </ligand>
</feature>
<feature type="binding site" evidence="1">
    <location>
        <begin position="91"/>
        <end position="93"/>
    </location>
    <ligand>
        <name>ATP</name>
        <dbReference type="ChEBI" id="CHEBI:30616"/>
    </ligand>
</feature>
<feature type="binding site" evidence="1">
    <location>
        <position position="101"/>
    </location>
    <ligand>
        <name>ATP</name>
        <dbReference type="ChEBI" id="CHEBI:30616"/>
    </ligand>
</feature>
<feature type="binding site" evidence="1">
    <location>
        <begin position="126"/>
        <end position="132"/>
    </location>
    <ligand>
        <name>ATP</name>
        <dbReference type="ChEBI" id="CHEBI:30616"/>
    </ligand>
</feature>
<feature type="site" description="Transition state stabilizer" evidence="1">
    <location>
        <position position="19"/>
    </location>
</feature>
<organism>
    <name type="scientific">Streptococcus pneumoniae (strain ATCC BAA-255 / R6)</name>
    <dbReference type="NCBI Taxonomy" id="171101"/>
    <lineage>
        <taxon>Bacteria</taxon>
        <taxon>Bacillati</taxon>
        <taxon>Bacillota</taxon>
        <taxon>Bacilli</taxon>
        <taxon>Lactobacillales</taxon>
        <taxon>Streptococcaceae</taxon>
        <taxon>Streptococcus</taxon>
    </lineage>
</organism>
<accession>Q8DNE6</accession>
<sequence>MSDKIGLFTGSFDPMTNGHLDIIERASRLFDKLYVGIFFNPHKQGFLPIENRKRGLEKALGHLENVEVVASHDELVVDVAKRLGATCLVRGLRNASDLQYEASFDYYNHQLSSDIETIYLHSRPEHLYISSSGVRELLKFGQDIACYVPESILEEIRNEKKD</sequence>
<comment type="function">
    <text evidence="1 2">Reversibly transfers an adenylyl group from ATP to 4'-phosphopantetheine, yielding dephospho-CoA (dPCoA) and pyrophosphate.</text>
</comment>
<comment type="catalytic activity">
    <reaction evidence="1 2">
        <text>(R)-4'-phosphopantetheine + ATP + H(+) = 3'-dephospho-CoA + diphosphate</text>
        <dbReference type="Rhea" id="RHEA:19801"/>
        <dbReference type="ChEBI" id="CHEBI:15378"/>
        <dbReference type="ChEBI" id="CHEBI:30616"/>
        <dbReference type="ChEBI" id="CHEBI:33019"/>
        <dbReference type="ChEBI" id="CHEBI:57328"/>
        <dbReference type="ChEBI" id="CHEBI:61723"/>
        <dbReference type="EC" id="2.7.7.3"/>
    </reaction>
</comment>
<comment type="cofactor">
    <cofactor evidence="1">
        <name>Mg(2+)</name>
        <dbReference type="ChEBI" id="CHEBI:18420"/>
    </cofactor>
</comment>
<comment type="activity regulation">
    <text evidence="2">Is inhibited by a series of cycloalkyl pyrimidines, which also show suppression of bacterial growth.</text>
</comment>
<comment type="pathway">
    <text evidence="1">Cofactor biosynthesis; coenzyme A biosynthesis; CoA from (R)-pantothenate: step 4/5.</text>
</comment>
<comment type="subunit">
    <text evidence="1">Homohexamer.</text>
</comment>
<comment type="subcellular location">
    <subcellularLocation>
        <location evidence="1">Cytoplasm</location>
    </subcellularLocation>
</comment>
<comment type="biotechnology">
    <text evidence="2">PPAT is a validated novel target for antibacterial therapy against Gram-positive bacteria.</text>
</comment>
<comment type="similarity">
    <text evidence="1">Belongs to the bacterial CoaD family.</text>
</comment>
<proteinExistence type="evidence at protein level"/>
<evidence type="ECO:0000255" key="1">
    <source>
        <dbReference type="HAMAP-Rule" id="MF_00151"/>
    </source>
</evidence>
<evidence type="ECO:0000269" key="2">
    <source>
    </source>
</evidence>
<evidence type="ECO:0000303" key="3">
    <source>
    </source>
</evidence>
<dbReference type="EC" id="2.7.7.3" evidence="1 2"/>
<dbReference type="EMBL" id="AE007317">
    <property type="protein sequence ID" value="AAL00586.1"/>
    <property type="molecule type" value="Genomic_DNA"/>
</dbReference>
<dbReference type="PIR" id="E98094">
    <property type="entry name" value="E98094"/>
</dbReference>
<dbReference type="RefSeq" id="NP_359375.1">
    <property type="nucleotide sequence ID" value="NC_003098.1"/>
</dbReference>
<dbReference type="RefSeq" id="WP_001280727.1">
    <property type="nucleotide sequence ID" value="NC_003098.1"/>
</dbReference>
<dbReference type="SMR" id="Q8DNE6"/>
<dbReference type="STRING" id="171101.spr1783"/>
<dbReference type="KEGG" id="spr:spr1783"/>
<dbReference type="PATRIC" id="fig|171101.6.peg.1925"/>
<dbReference type="eggNOG" id="COG0669">
    <property type="taxonomic scope" value="Bacteria"/>
</dbReference>
<dbReference type="HOGENOM" id="CLU_100149_0_1_9"/>
<dbReference type="BRENDA" id="2.7.7.3">
    <property type="organism ID" value="1960"/>
</dbReference>
<dbReference type="UniPathway" id="UPA00241">
    <property type="reaction ID" value="UER00355"/>
</dbReference>
<dbReference type="Proteomes" id="UP000000586">
    <property type="component" value="Chromosome"/>
</dbReference>
<dbReference type="GO" id="GO:0005737">
    <property type="term" value="C:cytoplasm"/>
    <property type="evidence" value="ECO:0007669"/>
    <property type="project" value="UniProtKB-SubCell"/>
</dbReference>
<dbReference type="GO" id="GO:0005524">
    <property type="term" value="F:ATP binding"/>
    <property type="evidence" value="ECO:0007669"/>
    <property type="project" value="UniProtKB-KW"/>
</dbReference>
<dbReference type="GO" id="GO:0004595">
    <property type="term" value="F:pantetheine-phosphate adenylyltransferase activity"/>
    <property type="evidence" value="ECO:0000318"/>
    <property type="project" value="GO_Central"/>
</dbReference>
<dbReference type="GO" id="GO:0015937">
    <property type="term" value="P:coenzyme A biosynthetic process"/>
    <property type="evidence" value="ECO:0000318"/>
    <property type="project" value="GO_Central"/>
</dbReference>
<dbReference type="CDD" id="cd02163">
    <property type="entry name" value="PPAT"/>
    <property type="match status" value="1"/>
</dbReference>
<dbReference type="Gene3D" id="3.40.50.620">
    <property type="entry name" value="HUPs"/>
    <property type="match status" value="1"/>
</dbReference>
<dbReference type="HAMAP" id="MF_00151">
    <property type="entry name" value="PPAT_bact"/>
    <property type="match status" value="1"/>
</dbReference>
<dbReference type="InterPro" id="IPR004821">
    <property type="entry name" value="Cyt_trans-like"/>
</dbReference>
<dbReference type="InterPro" id="IPR001980">
    <property type="entry name" value="PPAT"/>
</dbReference>
<dbReference type="InterPro" id="IPR014729">
    <property type="entry name" value="Rossmann-like_a/b/a_fold"/>
</dbReference>
<dbReference type="NCBIfam" id="TIGR01510">
    <property type="entry name" value="coaD_prev_kdtB"/>
    <property type="match status" value="1"/>
</dbReference>
<dbReference type="NCBIfam" id="TIGR00125">
    <property type="entry name" value="cyt_tran_rel"/>
    <property type="match status" value="1"/>
</dbReference>
<dbReference type="PANTHER" id="PTHR21342">
    <property type="entry name" value="PHOSPHOPANTETHEINE ADENYLYLTRANSFERASE"/>
    <property type="match status" value="1"/>
</dbReference>
<dbReference type="PANTHER" id="PTHR21342:SF1">
    <property type="entry name" value="PHOSPHOPANTETHEINE ADENYLYLTRANSFERASE"/>
    <property type="match status" value="1"/>
</dbReference>
<dbReference type="Pfam" id="PF01467">
    <property type="entry name" value="CTP_transf_like"/>
    <property type="match status" value="1"/>
</dbReference>
<dbReference type="PRINTS" id="PR01020">
    <property type="entry name" value="LPSBIOSNTHSS"/>
</dbReference>
<dbReference type="SUPFAM" id="SSF52374">
    <property type="entry name" value="Nucleotidylyl transferase"/>
    <property type="match status" value="1"/>
</dbReference>